<protein>
    <recommendedName>
        <fullName evidence="1">3-isopropylmalate dehydratase large subunit</fullName>
        <ecNumber evidence="1">4.2.1.33</ecNumber>
    </recommendedName>
    <alternativeName>
        <fullName evidence="1">Alpha-IPM isomerase</fullName>
        <shortName evidence="1">IPMI</shortName>
    </alternativeName>
    <alternativeName>
        <fullName evidence="1">Isopropylmalate isomerase</fullName>
    </alternativeName>
</protein>
<proteinExistence type="inferred from homology"/>
<name>LEUC_MYCSS</name>
<accession>Q1BAQ4</accession>
<organism>
    <name type="scientific">Mycobacterium sp. (strain MCS)</name>
    <dbReference type="NCBI Taxonomy" id="164756"/>
    <lineage>
        <taxon>Bacteria</taxon>
        <taxon>Bacillati</taxon>
        <taxon>Actinomycetota</taxon>
        <taxon>Actinomycetes</taxon>
        <taxon>Mycobacteriales</taxon>
        <taxon>Mycobacteriaceae</taxon>
        <taxon>Mycobacterium</taxon>
    </lineage>
</organism>
<keyword id="KW-0004">4Fe-4S</keyword>
<keyword id="KW-0028">Amino-acid biosynthesis</keyword>
<keyword id="KW-0100">Branched-chain amino acid biosynthesis</keyword>
<keyword id="KW-0408">Iron</keyword>
<keyword id="KW-0411">Iron-sulfur</keyword>
<keyword id="KW-0432">Leucine biosynthesis</keyword>
<keyword id="KW-0456">Lyase</keyword>
<keyword id="KW-0479">Metal-binding</keyword>
<feature type="chain" id="PRO_0000319821" description="3-isopropylmalate dehydratase large subunit">
    <location>
        <begin position="1"/>
        <end position="481"/>
    </location>
</feature>
<feature type="region of interest" description="Disordered" evidence="2">
    <location>
        <begin position="429"/>
        <end position="451"/>
    </location>
</feature>
<feature type="compositionally biased region" description="Polar residues" evidence="2">
    <location>
        <begin position="429"/>
        <end position="441"/>
    </location>
</feature>
<feature type="binding site" evidence="1">
    <location>
        <position position="357"/>
    </location>
    <ligand>
        <name>[4Fe-4S] cluster</name>
        <dbReference type="ChEBI" id="CHEBI:49883"/>
    </ligand>
</feature>
<feature type="binding site" evidence="1">
    <location>
        <position position="417"/>
    </location>
    <ligand>
        <name>[4Fe-4S] cluster</name>
        <dbReference type="ChEBI" id="CHEBI:49883"/>
    </ligand>
</feature>
<feature type="binding site" evidence="1">
    <location>
        <position position="420"/>
    </location>
    <ligand>
        <name>[4Fe-4S] cluster</name>
        <dbReference type="ChEBI" id="CHEBI:49883"/>
    </ligand>
</feature>
<evidence type="ECO:0000255" key="1">
    <source>
        <dbReference type="HAMAP-Rule" id="MF_01026"/>
    </source>
</evidence>
<evidence type="ECO:0000256" key="2">
    <source>
        <dbReference type="SAM" id="MobiDB-lite"/>
    </source>
</evidence>
<gene>
    <name evidence="1" type="primary">leuC</name>
    <name type="ordered locus">Mmcs_1921</name>
</gene>
<sequence length="481" mass="51016">MAQPATPRTMAEKVWADHVVAHGIGEGAAREPDLIYIDLHLVHEVTSPQAFDGLRLANRPVRRPDLTIATEDHNVPTVDIDKPIADPVSRTQVETLRRNCAEFGIRLHPMGDAEQGIVHIIGPQLGLTQPGMTVVCGDSHTSTHGAFGALAMGIGTSEVEHVLATQTLPLRPFRTMAVNVDGELPPGVSAKDIILAVIAKIGTGGGQGHVIEYRGSAIESLSMEGRMTICNMSIEAGARAGMVAPDDTTFEFLRGRPHAPTGADWDAAVEAWRQLRTDPGAEFDTEVHLDAAELSPFVTWGTNPGQGVPLSGAVPDPELIVDEGERQAAEKALTYMGLQAGTAMRDVAVDTVFVGSCTNGRIEDLRVVADVLRGRRVADGIRMLVVPGSMRVRAQAESEGLDRIFIDAGAEWRQAGCSMCLGMNPDQLSPGQRCASTSNRNFEGRQGKGGRTHLVSPAVAAATAVRGTLSSPADLSAVPAR</sequence>
<dbReference type="EC" id="4.2.1.33" evidence="1"/>
<dbReference type="EMBL" id="CP000384">
    <property type="protein sequence ID" value="ABG08030.1"/>
    <property type="molecule type" value="Genomic_DNA"/>
</dbReference>
<dbReference type="SMR" id="Q1BAQ4"/>
<dbReference type="KEGG" id="mmc:Mmcs_1921"/>
<dbReference type="HOGENOM" id="CLU_006714_3_4_11"/>
<dbReference type="BioCyc" id="MSP164756:G1G6O-1965-MONOMER"/>
<dbReference type="UniPathway" id="UPA00048">
    <property type="reaction ID" value="UER00071"/>
</dbReference>
<dbReference type="GO" id="GO:0003861">
    <property type="term" value="F:3-isopropylmalate dehydratase activity"/>
    <property type="evidence" value="ECO:0007669"/>
    <property type="project" value="UniProtKB-UniRule"/>
</dbReference>
<dbReference type="GO" id="GO:0051539">
    <property type="term" value="F:4 iron, 4 sulfur cluster binding"/>
    <property type="evidence" value="ECO:0007669"/>
    <property type="project" value="UniProtKB-KW"/>
</dbReference>
<dbReference type="GO" id="GO:0046872">
    <property type="term" value="F:metal ion binding"/>
    <property type="evidence" value="ECO:0007669"/>
    <property type="project" value="UniProtKB-KW"/>
</dbReference>
<dbReference type="GO" id="GO:0009098">
    <property type="term" value="P:L-leucine biosynthetic process"/>
    <property type="evidence" value="ECO:0007669"/>
    <property type="project" value="UniProtKB-UniRule"/>
</dbReference>
<dbReference type="CDD" id="cd01583">
    <property type="entry name" value="IPMI"/>
    <property type="match status" value="1"/>
</dbReference>
<dbReference type="FunFam" id="3.30.499.10:FF:000007">
    <property type="entry name" value="3-isopropylmalate dehydratase large subunit"/>
    <property type="match status" value="1"/>
</dbReference>
<dbReference type="Gene3D" id="3.30.499.10">
    <property type="entry name" value="Aconitase, domain 3"/>
    <property type="match status" value="2"/>
</dbReference>
<dbReference type="HAMAP" id="MF_01026">
    <property type="entry name" value="LeuC_type1"/>
    <property type="match status" value="1"/>
</dbReference>
<dbReference type="InterPro" id="IPR004430">
    <property type="entry name" value="3-IsopropMal_deHydase_lsu"/>
</dbReference>
<dbReference type="InterPro" id="IPR015931">
    <property type="entry name" value="Acnase/IPM_dHydase_lsu_aba_1/3"/>
</dbReference>
<dbReference type="InterPro" id="IPR001030">
    <property type="entry name" value="Acoase/IPM_deHydtase_lsu_aba"/>
</dbReference>
<dbReference type="InterPro" id="IPR018136">
    <property type="entry name" value="Aconitase_4Fe-4S_BS"/>
</dbReference>
<dbReference type="InterPro" id="IPR036008">
    <property type="entry name" value="Aconitase_4Fe-4S_dom"/>
</dbReference>
<dbReference type="InterPro" id="IPR050067">
    <property type="entry name" value="IPM_dehydratase_rel_enz"/>
</dbReference>
<dbReference type="InterPro" id="IPR033941">
    <property type="entry name" value="IPMI_cat"/>
</dbReference>
<dbReference type="NCBIfam" id="TIGR00170">
    <property type="entry name" value="leuC"/>
    <property type="match status" value="1"/>
</dbReference>
<dbReference type="NCBIfam" id="NF004016">
    <property type="entry name" value="PRK05478.1"/>
    <property type="match status" value="1"/>
</dbReference>
<dbReference type="NCBIfam" id="NF009116">
    <property type="entry name" value="PRK12466.1"/>
    <property type="match status" value="1"/>
</dbReference>
<dbReference type="PANTHER" id="PTHR43822:SF9">
    <property type="entry name" value="3-ISOPROPYLMALATE DEHYDRATASE"/>
    <property type="match status" value="1"/>
</dbReference>
<dbReference type="PANTHER" id="PTHR43822">
    <property type="entry name" value="HOMOACONITASE, MITOCHONDRIAL-RELATED"/>
    <property type="match status" value="1"/>
</dbReference>
<dbReference type="Pfam" id="PF00330">
    <property type="entry name" value="Aconitase"/>
    <property type="match status" value="1"/>
</dbReference>
<dbReference type="PRINTS" id="PR00415">
    <property type="entry name" value="ACONITASE"/>
</dbReference>
<dbReference type="SUPFAM" id="SSF53732">
    <property type="entry name" value="Aconitase iron-sulfur domain"/>
    <property type="match status" value="1"/>
</dbReference>
<dbReference type="PROSITE" id="PS00450">
    <property type="entry name" value="ACONITASE_1"/>
    <property type="match status" value="1"/>
</dbReference>
<dbReference type="PROSITE" id="PS01244">
    <property type="entry name" value="ACONITASE_2"/>
    <property type="match status" value="1"/>
</dbReference>
<comment type="function">
    <text evidence="1">Catalyzes the isomerization between 2-isopropylmalate and 3-isopropylmalate, via the formation of 2-isopropylmaleate.</text>
</comment>
<comment type="catalytic activity">
    <reaction evidence="1">
        <text>(2R,3S)-3-isopropylmalate = (2S)-2-isopropylmalate</text>
        <dbReference type="Rhea" id="RHEA:32287"/>
        <dbReference type="ChEBI" id="CHEBI:1178"/>
        <dbReference type="ChEBI" id="CHEBI:35121"/>
        <dbReference type="EC" id="4.2.1.33"/>
    </reaction>
</comment>
<comment type="cofactor">
    <cofactor evidence="1">
        <name>[4Fe-4S] cluster</name>
        <dbReference type="ChEBI" id="CHEBI:49883"/>
    </cofactor>
    <text evidence="1">Binds 1 [4Fe-4S] cluster per subunit.</text>
</comment>
<comment type="pathway">
    <text evidence="1">Amino-acid biosynthesis; L-leucine biosynthesis; L-leucine from 3-methyl-2-oxobutanoate: step 2/4.</text>
</comment>
<comment type="subunit">
    <text evidence="1">Heterodimer of LeuC and LeuD.</text>
</comment>
<comment type="similarity">
    <text evidence="1">Belongs to the aconitase/IPM isomerase family. LeuC type 1 subfamily.</text>
</comment>
<reference key="1">
    <citation type="submission" date="2006-06" db="EMBL/GenBank/DDBJ databases">
        <title>Complete sequence of chromosome of Mycobacterium sp. MCS.</title>
        <authorList>
            <consortium name="US DOE Joint Genome Institute"/>
            <person name="Copeland A."/>
            <person name="Lucas S."/>
            <person name="Lapidus A."/>
            <person name="Barry K."/>
            <person name="Detter J.C."/>
            <person name="Glavina del Rio T."/>
            <person name="Hammon N."/>
            <person name="Israni S."/>
            <person name="Dalin E."/>
            <person name="Tice H."/>
            <person name="Pitluck S."/>
            <person name="Martinez M."/>
            <person name="Schmutz J."/>
            <person name="Larimer F."/>
            <person name="Land M."/>
            <person name="Hauser L."/>
            <person name="Kyrpides N."/>
            <person name="Kim E."/>
            <person name="Miller C.D."/>
            <person name="Hughes J.E."/>
            <person name="Anderson A.J."/>
            <person name="Sims R.C."/>
            <person name="Richardson P."/>
        </authorList>
    </citation>
    <scope>NUCLEOTIDE SEQUENCE [LARGE SCALE GENOMIC DNA]</scope>
    <source>
        <strain>MCS</strain>
    </source>
</reference>